<gene>
    <name evidence="1" type="primary">rplI</name>
    <name type="ordered locus">CLK_3106</name>
</gene>
<feature type="chain" id="PRO_1000126893" description="Large ribosomal subunit protein bL9">
    <location>
        <begin position="1"/>
        <end position="147"/>
    </location>
</feature>
<accession>B1KU91</accession>
<keyword id="KW-0687">Ribonucleoprotein</keyword>
<keyword id="KW-0689">Ribosomal protein</keyword>
<keyword id="KW-0694">RNA-binding</keyword>
<keyword id="KW-0699">rRNA-binding</keyword>
<comment type="function">
    <text evidence="1">Binds to the 23S rRNA.</text>
</comment>
<comment type="similarity">
    <text evidence="1">Belongs to the bacterial ribosomal protein bL9 family.</text>
</comment>
<evidence type="ECO:0000255" key="1">
    <source>
        <dbReference type="HAMAP-Rule" id="MF_00503"/>
    </source>
</evidence>
<evidence type="ECO:0000305" key="2"/>
<sequence>MKVILLKDVKSLGKKGDLVNASDGYARNYLIPKKLAEQATENNVHILNNKKEAERRQKLKELEEAQKLAKSLMGKEIKFKVKIGENGRLFGSITSKDISEKLKEQYNMDIDKKKIVAETIRQTGVYEAEIKIYPEVSTKVKVSVLEE</sequence>
<name>RL9_CLOBM</name>
<organism>
    <name type="scientific">Clostridium botulinum (strain Loch Maree / Type A3)</name>
    <dbReference type="NCBI Taxonomy" id="498214"/>
    <lineage>
        <taxon>Bacteria</taxon>
        <taxon>Bacillati</taxon>
        <taxon>Bacillota</taxon>
        <taxon>Clostridia</taxon>
        <taxon>Eubacteriales</taxon>
        <taxon>Clostridiaceae</taxon>
        <taxon>Clostridium</taxon>
    </lineage>
</organism>
<proteinExistence type="inferred from homology"/>
<dbReference type="EMBL" id="CP000962">
    <property type="protein sequence ID" value="ACA53774.1"/>
    <property type="molecule type" value="Genomic_DNA"/>
</dbReference>
<dbReference type="RefSeq" id="WP_003359455.1">
    <property type="nucleotide sequence ID" value="NC_010520.1"/>
</dbReference>
<dbReference type="SMR" id="B1KU91"/>
<dbReference type="GeneID" id="92940422"/>
<dbReference type="KEGG" id="cbl:CLK_3106"/>
<dbReference type="HOGENOM" id="CLU_078938_3_0_9"/>
<dbReference type="GO" id="GO:1990904">
    <property type="term" value="C:ribonucleoprotein complex"/>
    <property type="evidence" value="ECO:0007669"/>
    <property type="project" value="UniProtKB-KW"/>
</dbReference>
<dbReference type="GO" id="GO:0005840">
    <property type="term" value="C:ribosome"/>
    <property type="evidence" value="ECO:0007669"/>
    <property type="project" value="UniProtKB-KW"/>
</dbReference>
<dbReference type="GO" id="GO:0019843">
    <property type="term" value="F:rRNA binding"/>
    <property type="evidence" value="ECO:0007669"/>
    <property type="project" value="UniProtKB-UniRule"/>
</dbReference>
<dbReference type="GO" id="GO:0003735">
    <property type="term" value="F:structural constituent of ribosome"/>
    <property type="evidence" value="ECO:0007669"/>
    <property type="project" value="InterPro"/>
</dbReference>
<dbReference type="GO" id="GO:0006412">
    <property type="term" value="P:translation"/>
    <property type="evidence" value="ECO:0007669"/>
    <property type="project" value="UniProtKB-UniRule"/>
</dbReference>
<dbReference type="FunFam" id="3.40.5.10:FF:000002">
    <property type="entry name" value="50S ribosomal protein L9"/>
    <property type="match status" value="1"/>
</dbReference>
<dbReference type="Gene3D" id="3.10.430.100">
    <property type="entry name" value="Ribosomal protein L9, C-terminal domain"/>
    <property type="match status" value="1"/>
</dbReference>
<dbReference type="Gene3D" id="3.40.5.10">
    <property type="entry name" value="Ribosomal protein L9, N-terminal domain"/>
    <property type="match status" value="1"/>
</dbReference>
<dbReference type="HAMAP" id="MF_00503">
    <property type="entry name" value="Ribosomal_bL9"/>
    <property type="match status" value="1"/>
</dbReference>
<dbReference type="InterPro" id="IPR000244">
    <property type="entry name" value="Ribosomal_bL9"/>
</dbReference>
<dbReference type="InterPro" id="IPR009027">
    <property type="entry name" value="Ribosomal_bL9/RNase_H1_N"/>
</dbReference>
<dbReference type="InterPro" id="IPR020594">
    <property type="entry name" value="Ribosomal_bL9_bac/chp"/>
</dbReference>
<dbReference type="InterPro" id="IPR020069">
    <property type="entry name" value="Ribosomal_bL9_C"/>
</dbReference>
<dbReference type="InterPro" id="IPR036791">
    <property type="entry name" value="Ribosomal_bL9_C_sf"/>
</dbReference>
<dbReference type="InterPro" id="IPR020070">
    <property type="entry name" value="Ribosomal_bL9_N"/>
</dbReference>
<dbReference type="InterPro" id="IPR036935">
    <property type="entry name" value="Ribosomal_bL9_N_sf"/>
</dbReference>
<dbReference type="NCBIfam" id="TIGR00158">
    <property type="entry name" value="L9"/>
    <property type="match status" value="1"/>
</dbReference>
<dbReference type="PANTHER" id="PTHR21368">
    <property type="entry name" value="50S RIBOSOMAL PROTEIN L9"/>
    <property type="match status" value="1"/>
</dbReference>
<dbReference type="Pfam" id="PF03948">
    <property type="entry name" value="Ribosomal_L9_C"/>
    <property type="match status" value="1"/>
</dbReference>
<dbReference type="Pfam" id="PF01281">
    <property type="entry name" value="Ribosomal_L9_N"/>
    <property type="match status" value="1"/>
</dbReference>
<dbReference type="SUPFAM" id="SSF55658">
    <property type="entry name" value="L9 N-domain-like"/>
    <property type="match status" value="1"/>
</dbReference>
<dbReference type="SUPFAM" id="SSF55653">
    <property type="entry name" value="Ribosomal protein L9 C-domain"/>
    <property type="match status" value="1"/>
</dbReference>
<dbReference type="PROSITE" id="PS00651">
    <property type="entry name" value="RIBOSOMAL_L9"/>
    <property type="match status" value="1"/>
</dbReference>
<protein>
    <recommendedName>
        <fullName evidence="1">Large ribosomal subunit protein bL9</fullName>
    </recommendedName>
    <alternativeName>
        <fullName evidence="2">50S ribosomal protein L9</fullName>
    </alternativeName>
</protein>
<reference key="1">
    <citation type="journal article" date="2007" name="PLoS ONE">
        <title>Analysis of the neurotoxin complex genes in Clostridium botulinum A1-A4 and B1 strains: BoNT/A3, /Ba4 and /B1 clusters are located within plasmids.</title>
        <authorList>
            <person name="Smith T.J."/>
            <person name="Hill K.K."/>
            <person name="Foley B.T."/>
            <person name="Detter J.C."/>
            <person name="Munk A.C."/>
            <person name="Bruce D.C."/>
            <person name="Doggett N.A."/>
            <person name="Smith L.A."/>
            <person name="Marks J.D."/>
            <person name="Xie G."/>
            <person name="Brettin T.S."/>
        </authorList>
    </citation>
    <scope>NUCLEOTIDE SEQUENCE [LARGE SCALE GENOMIC DNA]</scope>
    <source>
        <strain>Loch Maree / Type A3</strain>
    </source>
</reference>